<evidence type="ECO:0000250" key="1"/>
<evidence type="ECO:0000250" key="2">
    <source>
        <dbReference type="UniProtKB" id="Q86TX2"/>
    </source>
</evidence>
<evidence type="ECO:0000269" key="3">
    <source>
    </source>
</evidence>
<evidence type="ECO:0000269" key="4">
    <source>
    </source>
</evidence>
<evidence type="ECO:0000305" key="5"/>
<evidence type="ECO:0000305" key="6">
    <source>
    </source>
</evidence>
<evidence type="ECO:0007744" key="7">
    <source>
    </source>
</evidence>
<proteinExistence type="evidence at protein level"/>
<gene>
    <name type="primary">Acot1</name>
    <name type="synonym">Cte1</name>
</gene>
<dbReference type="EC" id="3.1.2.-" evidence="3"/>
<dbReference type="EC" id="3.1.2.2" evidence="3"/>
<dbReference type="EMBL" id="AB010428">
    <property type="protein sequence ID" value="BAA32434.1"/>
    <property type="molecule type" value="mRNA"/>
</dbReference>
<dbReference type="EMBL" id="Y09334">
    <property type="protein sequence ID" value="CAA70514.1"/>
    <property type="molecule type" value="mRNA"/>
</dbReference>
<dbReference type="PIR" id="JE0267">
    <property type="entry name" value="JE0267"/>
</dbReference>
<dbReference type="RefSeq" id="NP_112605.1">
    <property type="nucleotide sequence ID" value="NM_031315.2"/>
</dbReference>
<dbReference type="SMR" id="O88267"/>
<dbReference type="FunCoup" id="O88267">
    <property type="interactions" value="62"/>
</dbReference>
<dbReference type="SwissLipids" id="SLP:000000588"/>
<dbReference type="ESTHER" id="ratno-acot1">
    <property type="family name" value="Acyl-CoA_Thioesterase"/>
</dbReference>
<dbReference type="MEROPS" id="S09.A53"/>
<dbReference type="iPTMnet" id="O88267"/>
<dbReference type="PhosphoSitePlus" id="O88267"/>
<dbReference type="PaxDb" id="10116-ENSRNOP00000013729"/>
<dbReference type="GeneID" id="50559"/>
<dbReference type="KEGG" id="rno:50559"/>
<dbReference type="UCSC" id="RGD:70894">
    <property type="organism name" value="rat"/>
</dbReference>
<dbReference type="AGR" id="RGD:70894"/>
<dbReference type="CTD" id="641371"/>
<dbReference type="RGD" id="70894">
    <property type="gene designation" value="Acot1"/>
</dbReference>
<dbReference type="eggNOG" id="ENOG502QQ8Z">
    <property type="taxonomic scope" value="Eukaryota"/>
</dbReference>
<dbReference type="InParanoid" id="O88267"/>
<dbReference type="OrthoDB" id="6347013at2759"/>
<dbReference type="PhylomeDB" id="O88267"/>
<dbReference type="BRENDA" id="3.1.2.2">
    <property type="organism ID" value="5301"/>
</dbReference>
<dbReference type="BRENDA" id="3.1.2.20">
    <property type="organism ID" value="5301"/>
</dbReference>
<dbReference type="Reactome" id="R-RNO-77289">
    <property type="pathway name" value="Mitochondrial Fatty Acid Beta-Oxidation"/>
</dbReference>
<dbReference type="Reactome" id="R-RNO-9033241">
    <property type="pathway name" value="Peroxisomal protein import"/>
</dbReference>
<dbReference type="Reactome" id="R-RNO-9837999">
    <property type="pathway name" value="Mitochondrial protein degradation"/>
</dbReference>
<dbReference type="UniPathway" id="UPA00199"/>
<dbReference type="PRO" id="PR:O88267"/>
<dbReference type="Proteomes" id="UP000002494">
    <property type="component" value="Unplaced"/>
</dbReference>
<dbReference type="GO" id="GO:0005829">
    <property type="term" value="C:cytosol"/>
    <property type="evidence" value="ECO:0000266"/>
    <property type="project" value="RGD"/>
</dbReference>
<dbReference type="GO" id="GO:0052689">
    <property type="term" value="F:carboxylic ester hydrolase activity"/>
    <property type="evidence" value="ECO:0007669"/>
    <property type="project" value="UniProtKB-KW"/>
</dbReference>
<dbReference type="GO" id="GO:0047617">
    <property type="term" value="F:fatty acyl-CoA hydrolase activity"/>
    <property type="evidence" value="ECO:0000314"/>
    <property type="project" value="UniProtKB"/>
</dbReference>
<dbReference type="GO" id="GO:0006637">
    <property type="term" value="P:acyl-CoA metabolic process"/>
    <property type="evidence" value="ECO:0000266"/>
    <property type="project" value="RGD"/>
</dbReference>
<dbReference type="GO" id="GO:0006631">
    <property type="term" value="P:fatty acid metabolic process"/>
    <property type="evidence" value="ECO:0000318"/>
    <property type="project" value="GO_Central"/>
</dbReference>
<dbReference type="GO" id="GO:0001676">
    <property type="term" value="P:long-chain fatty acid metabolic process"/>
    <property type="evidence" value="ECO:0000314"/>
    <property type="project" value="UniProtKB"/>
</dbReference>
<dbReference type="GO" id="GO:0010667">
    <property type="term" value="P:negative regulation of cardiac muscle cell apoptotic process"/>
    <property type="evidence" value="ECO:0000315"/>
    <property type="project" value="RGD"/>
</dbReference>
<dbReference type="GO" id="GO:0000038">
    <property type="term" value="P:very long-chain fatty acid metabolic process"/>
    <property type="evidence" value="ECO:0000266"/>
    <property type="project" value="RGD"/>
</dbReference>
<dbReference type="FunFam" id="2.60.40.2240:FF:000001">
    <property type="entry name" value="acyl-coenzyme A thioesterase 4"/>
    <property type="match status" value="1"/>
</dbReference>
<dbReference type="FunFam" id="3.40.50.1820:FF:000024">
    <property type="entry name" value="acyl-coenzyme A thioesterase 4"/>
    <property type="match status" value="1"/>
</dbReference>
<dbReference type="Gene3D" id="2.60.40.2240">
    <property type="entry name" value="Acyl-CoA thioester hydrolase/BAAT N-terminal domain"/>
    <property type="match status" value="1"/>
</dbReference>
<dbReference type="Gene3D" id="3.40.50.1820">
    <property type="entry name" value="alpha/beta hydrolase"/>
    <property type="match status" value="1"/>
</dbReference>
<dbReference type="InterPro" id="IPR029058">
    <property type="entry name" value="AB_hydrolase_fold"/>
</dbReference>
<dbReference type="InterPro" id="IPR016662">
    <property type="entry name" value="Acyl-CoA_thioEstase_long-chain"/>
</dbReference>
<dbReference type="InterPro" id="IPR014940">
    <property type="entry name" value="BAAT_C"/>
</dbReference>
<dbReference type="InterPro" id="IPR006862">
    <property type="entry name" value="Thio_Ohase/aa_AcTrfase"/>
</dbReference>
<dbReference type="InterPro" id="IPR042490">
    <property type="entry name" value="Thio_Ohase/BAAT_N"/>
</dbReference>
<dbReference type="PANTHER" id="PTHR10824:SF12">
    <property type="entry name" value="ACYL-COENZYME A THIOESTERASE 1-RELATED"/>
    <property type="match status" value="1"/>
</dbReference>
<dbReference type="PANTHER" id="PTHR10824">
    <property type="entry name" value="ACYL-COENZYME A THIOESTERASE-RELATED"/>
    <property type="match status" value="1"/>
</dbReference>
<dbReference type="Pfam" id="PF08840">
    <property type="entry name" value="BAAT_C"/>
    <property type="match status" value="1"/>
</dbReference>
<dbReference type="Pfam" id="PF04775">
    <property type="entry name" value="Bile_Hydr_Trans"/>
    <property type="match status" value="1"/>
</dbReference>
<dbReference type="PIRSF" id="PIRSF016521">
    <property type="entry name" value="Acyl-CoA_hydro"/>
    <property type="match status" value="1"/>
</dbReference>
<dbReference type="SUPFAM" id="SSF53474">
    <property type="entry name" value="alpha/beta-Hydrolases"/>
    <property type="match status" value="1"/>
</dbReference>
<protein>
    <recommendedName>
        <fullName evidence="6">Acyl-coenzyme A thioesterase 1</fullName>
        <shortName evidence="6">Acyl-CoA thioesterase 1</shortName>
        <ecNumber evidence="3">3.1.2.-</ecNumber>
    </recommendedName>
    <alternativeName>
        <fullName>CTE-I</fullName>
    </alternativeName>
    <alternativeName>
        <fullName>Inducible cytosolic acyl-coenzyme A thioester hydrolase</fullName>
    </alternativeName>
    <alternativeName>
        <fullName>LACH2</fullName>
        <shortName>ACH2</shortName>
    </alternativeName>
    <alternativeName>
        <fullName>Long chain acyl-CoA thioester hydrolase</fullName>
        <shortName>Long chain acyl-CoA hydrolase</shortName>
    </alternativeName>
    <alternativeName>
        <fullName evidence="6">Palmitoyl-coenzyme A thioesterase</fullName>
        <ecNumber evidence="3">3.1.2.2</ecNumber>
    </alternativeName>
</protein>
<comment type="function">
    <text evidence="3">Catalyzes the hydrolysis of acyl-CoAs into free fatty acids and coenzyme A (CoASH), regulating their respective intracellular levels. More active towards saturated and unsaturated long chain fatty acyl-CoAs (C12-C20).</text>
</comment>
<comment type="catalytic activity">
    <reaction evidence="3">
        <text>hexadecanoyl-CoA + H2O = hexadecanoate + CoA + H(+)</text>
        <dbReference type="Rhea" id="RHEA:16645"/>
        <dbReference type="ChEBI" id="CHEBI:7896"/>
        <dbReference type="ChEBI" id="CHEBI:15377"/>
        <dbReference type="ChEBI" id="CHEBI:15378"/>
        <dbReference type="ChEBI" id="CHEBI:57287"/>
        <dbReference type="ChEBI" id="CHEBI:57379"/>
        <dbReference type="EC" id="3.1.2.2"/>
    </reaction>
    <physiologicalReaction direction="left-to-right" evidence="6">
        <dbReference type="Rhea" id="RHEA:16646"/>
    </physiologicalReaction>
</comment>
<comment type="catalytic activity">
    <reaction evidence="3">
        <text>dodecanoyl-CoA + H2O = dodecanoate + CoA + H(+)</text>
        <dbReference type="Rhea" id="RHEA:30135"/>
        <dbReference type="ChEBI" id="CHEBI:15377"/>
        <dbReference type="ChEBI" id="CHEBI:15378"/>
        <dbReference type="ChEBI" id="CHEBI:18262"/>
        <dbReference type="ChEBI" id="CHEBI:57287"/>
        <dbReference type="ChEBI" id="CHEBI:57375"/>
    </reaction>
    <physiologicalReaction direction="left-to-right" evidence="6">
        <dbReference type="Rhea" id="RHEA:30136"/>
    </physiologicalReaction>
</comment>
<comment type="catalytic activity">
    <reaction evidence="3">
        <text>tetradecanoyl-CoA + H2O = tetradecanoate + CoA + H(+)</text>
        <dbReference type="Rhea" id="RHEA:40119"/>
        <dbReference type="ChEBI" id="CHEBI:15377"/>
        <dbReference type="ChEBI" id="CHEBI:15378"/>
        <dbReference type="ChEBI" id="CHEBI:30807"/>
        <dbReference type="ChEBI" id="CHEBI:57287"/>
        <dbReference type="ChEBI" id="CHEBI:57385"/>
    </reaction>
    <physiologicalReaction direction="left-to-right" evidence="6">
        <dbReference type="Rhea" id="RHEA:40120"/>
    </physiologicalReaction>
</comment>
<comment type="catalytic activity">
    <reaction evidence="2">
        <text>decanoyl-CoA + H2O = decanoate + CoA + H(+)</text>
        <dbReference type="Rhea" id="RHEA:40059"/>
        <dbReference type="ChEBI" id="CHEBI:15377"/>
        <dbReference type="ChEBI" id="CHEBI:15378"/>
        <dbReference type="ChEBI" id="CHEBI:27689"/>
        <dbReference type="ChEBI" id="CHEBI:57287"/>
        <dbReference type="ChEBI" id="CHEBI:61430"/>
    </reaction>
    <physiologicalReaction direction="left-to-right" evidence="2">
        <dbReference type="Rhea" id="RHEA:40060"/>
    </physiologicalReaction>
</comment>
<comment type="catalytic activity">
    <reaction evidence="2">
        <text>octadecanoyl-CoA + H2O = octadecanoate + CoA + H(+)</text>
        <dbReference type="Rhea" id="RHEA:30139"/>
        <dbReference type="ChEBI" id="CHEBI:15377"/>
        <dbReference type="ChEBI" id="CHEBI:15378"/>
        <dbReference type="ChEBI" id="CHEBI:25629"/>
        <dbReference type="ChEBI" id="CHEBI:57287"/>
        <dbReference type="ChEBI" id="CHEBI:57394"/>
    </reaction>
    <physiologicalReaction direction="left-to-right" evidence="2">
        <dbReference type="Rhea" id="RHEA:30140"/>
    </physiologicalReaction>
</comment>
<comment type="catalytic activity">
    <reaction evidence="2">
        <text>eicosanoyl-CoA + H2O = eicosanoate + CoA + H(+)</text>
        <dbReference type="Rhea" id="RHEA:40147"/>
        <dbReference type="ChEBI" id="CHEBI:15377"/>
        <dbReference type="ChEBI" id="CHEBI:15378"/>
        <dbReference type="ChEBI" id="CHEBI:32360"/>
        <dbReference type="ChEBI" id="CHEBI:57287"/>
        <dbReference type="ChEBI" id="CHEBI:57380"/>
    </reaction>
    <physiologicalReaction direction="left-to-right" evidence="2">
        <dbReference type="Rhea" id="RHEA:40148"/>
    </physiologicalReaction>
</comment>
<comment type="catalytic activity">
    <reaction evidence="2">
        <text>(9Z)-octadecenoyl-CoA + H2O = (9Z)-octadecenoate + CoA + H(+)</text>
        <dbReference type="Rhea" id="RHEA:40139"/>
        <dbReference type="ChEBI" id="CHEBI:15377"/>
        <dbReference type="ChEBI" id="CHEBI:15378"/>
        <dbReference type="ChEBI" id="CHEBI:30823"/>
        <dbReference type="ChEBI" id="CHEBI:57287"/>
        <dbReference type="ChEBI" id="CHEBI:57387"/>
    </reaction>
    <physiologicalReaction direction="left-to-right" evidence="2">
        <dbReference type="Rhea" id="RHEA:40140"/>
    </physiologicalReaction>
</comment>
<comment type="catalytic activity">
    <reaction evidence="2">
        <text>(9Z)-hexadecenoyl-CoA + H2O = (9Z)-hexadecenoate + CoA + H(+)</text>
        <dbReference type="Rhea" id="RHEA:40131"/>
        <dbReference type="ChEBI" id="CHEBI:15377"/>
        <dbReference type="ChEBI" id="CHEBI:15378"/>
        <dbReference type="ChEBI" id="CHEBI:32372"/>
        <dbReference type="ChEBI" id="CHEBI:57287"/>
        <dbReference type="ChEBI" id="CHEBI:61540"/>
    </reaction>
    <physiologicalReaction direction="left-to-right" evidence="2">
        <dbReference type="Rhea" id="RHEA:40132"/>
    </physiologicalReaction>
</comment>
<comment type="catalytic activity">
    <reaction evidence="2">
        <text>(9E)-octadecenoyl-CoA + H2O = (9E)-octadecenoate + CoA + H(+)</text>
        <dbReference type="Rhea" id="RHEA:40723"/>
        <dbReference type="ChEBI" id="CHEBI:15377"/>
        <dbReference type="ChEBI" id="CHEBI:15378"/>
        <dbReference type="ChEBI" id="CHEBI:30825"/>
        <dbReference type="ChEBI" id="CHEBI:57287"/>
        <dbReference type="ChEBI" id="CHEBI:77537"/>
    </reaction>
    <physiologicalReaction direction="left-to-right" evidence="2">
        <dbReference type="Rhea" id="RHEA:40724"/>
    </physiologicalReaction>
</comment>
<comment type="pathway">
    <text evidence="6">Lipid metabolism; fatty acid metabolism.</text>
</comment>
<comment type="subunit">
    <text>Monomer.</text>
</comment>
<comment type="subcellular location">
    <subcellularLocation>
        <location evidence="4">Cytoplasm</location>
        <location evidence="4">Cytosol</location>
    </subcellularLocation>
</comment>
<comment type="tissue specificity">
    <text>Expressed in liver.</text>
</comment>
<comment type="induction">
    <text>In the liver, by peroxisome proliferator (Clofibrate) treatment, via the peroxisome proliferator-activated receptors (PPARs) or fasting for 24 hours.</text>
</comment>
<comment type="similarity">
    <text evidence="5">Belongs to the C/M/P thioester hydrolase family.</text>
</comment>
<organism>
    <name type="scientific">Rattus norvegicus</name>
    <name type="common">Rat</name>
    <dbReference type="NCBI Taxonomy" id="10116"/>
    <lineage>
        <taxon>Eukaryota</taxon>
        <taxon>Metazoa</taxon>
        <taxon>Chordata</taxon>
        <taxon>Craniata</taxon>
        <taxon>Vertebrata</taxon>
        <taxon>Euteleostomi</taxon>
        <taxon>Mammalia</taxon>
        <taxon>Eutheria</taxon>
        <taxon>Euarchontoglires</taxon>
        <taxon>Glires</taxon>
        <taxon>Rodentia</taxon>
        <taxon>Myomorpha</taxon>
        <taxon>Muroidea</taxon>
        <taxon>Muridae</taxon>
        <taxon>Murinae</taxon>
        <taxon>Rattus</taxon>
    </lineage>
</organism>
<name>ACOT1_RAT</name>
<reference key="1">
    <citation type="journal article" date="1998" name="Biochem. Biophys. Res. Commun.">
        <title>cDNA cloning and genomic organization of peroxisome proliferator-inducible long-chain acyl-CoA hydrolase from rat liver cytosol.</title>
        <authorList>
            <person name="Yamada J."/>
            <person name="Suga K."/>
            <person name="Furihata T."/>
            <person name="Kitahara M."/>
            <person name="Watanabe T."/>
            <person name="Hosokawa M."/>
            <person name="Satoh T."/>
            <person name="Suga T."/>
        </authorList>
    </citation>
    <scope>NUCLEOTIDE SEQUENCE [MRNA]</scope>
    <scope>PROTEIN SEQUENCE OF 13-34; 85-107; 187-198; 312-324 AND 374-338</scope>
    <source>
        <tissue>Liver</tissue>
    </source>
</reference>
<reference key="2">
    <citation type="journal article" date="1998" name="Biochem. J.">
        <title>Molecular cloning and characterization of a mitochondrial peroxisome proliferator-induced acyl-CoA thioesterase from rat liver.</title>
        <authorList>
            <person name="Svensson L.T."/>
            <person name="Engberg S.T."/>
            <person name="Aoyama T."/>
            <person name="Usuda N."/>
            <person name="Alexson S.E.H."/>
            <person name="Hashimoto T."/>
        </authorList>
    </citation>
    <scope>NUCLEOTIDE SEQUENCE [MRNA]</scope>
    <scope>PROTEIN SEQUENCE OF 106-122</scope>
    <source>
        <strain>Sprague-Dawley</strain>
    </source>
</reference>
<reference key="3">
    <citation type="journal article" date="1998" name="Eur. J. Biochem.">
        <title>Molecular cloning of the peroxisome proliferator-induced 46-kDa cytosolic acyl-CoA thioesterase from mouse and rat liver --recombinant expression in Escherichia coli, tissue expression, and nutritional regulation.</title>
        <authorList>
            <person name="Lindquist P.J.G."/>
            <person name="Svensson L.T."/>
            <person name="Alexson S.E.H."/>
        </authorList>
    </citation>
    <scope>NUCLEOTIDE SEQUENCE [MRNA]</scope>
    <scope>SUBCELLULAR LOCATION</scope>
    <source>
        <tissue>Liver</tissue>
    </source>
</reference>
<reference key="4">
    <citation type="journal article" date="1994" name="Arch. Biochem. Biophys.">
        <title>Purification and properties of long-chain acyl-CoA hydrolases from the liver cytosol of rats treated with peroxisome proliferator.</title>
        <authorList>
            <person name="Yamada J."/>
            <person name="Matsumoto I."/>
            <person name="Furihata T."/>
            <person name="Sakuma M."/>
            <person name="Suga T."/>
        </authorList>
    </citation>
    <scope>FUNCTION</scope>
    <scope>CATALYTIC ACTIVITY</scope>
    <scope>PATHWAY</scope>
</reference>
<reference key="5">
    <citation type="journal article" date="2012" name="Nat. Commun.">
        <title>Quantitative maps of protein phosphorylation sites across 14 different rat organs and tissues.</title>
        <authorList>
            <person name="Lundby A."/>
            <person name="Secher A."/>
            <person name="Lage K."/>
            <person name="Nordsborg N.B."/>
            <person name="Dmytriyev A."/>
            <person name="Lundby C."/>
            <person name="Olsen J.V."/>
        </authorList>
    </citation>
    <scope>PHOSPHORYLATION [LARGE SCALE ANALYSIS] AT SER-416</scope>
    <scope>IDENTIFICATION BY MASS SPECTROMETRY [LARGE SCALE ANALYSIS]</scope>
</reference>
<keyword id="KW-0963">Cytoplasm</keyword>
<keyword id="KW-0903">Direct protein sequencing</keyword>
<keyword id="KW-0276">Fatty acid metabolism</keyword>
<keyword id="KW-0378">Hydrolase</keyword>
<keyword id="KW-0443">Lipid metabolism</keyword>
<keyword id="KW-0597">Phosphoprotein</keyword>
<keyword id="KW-1185">Reference proteome</keyword>
<keyword id="KW-0719">Serine esterase</keyword>
<sequence>MEATLSLEPAGRSCWDEPLSITVRGLVPEQPVTLRAALRDEKGALFRARALYRADAHGELDLARAPALGGSFTGLEPMGLIWAMEPERPFWRLVKRDVQTPFVVELEVLDGHEPDGGRLLARAVHERHFMAPGVRRVPVREGRVRATLFLPPEPGPFPGIIDLFGVGGGLLEYRASLLAGKGFAVMALAYYNYDDLPKTMETMRIEYFEEAVNYLRGHPEVKGPGIGLLGISKGGELGLAMASFLKGITAAVVINGSVAAVGNTICYKDETIPPVTILRNQVKMTKDGLKDVVDALQSPLVEQKSFIPVERSDTTFLFLVGQDDHNWKSEFYANEISKRLQAHGKEKPQIICYPEAGHYIEPPYFPLCSAGMHLLVGANITFGGEPKPHSVAQLDAWQQLQTFFHKQLGGKSHGVSPKI</sequence>
<accession>O88267</accession>
<accession>O55161</accession>
<feature type="chain" id="PRO_0000202157" description="Acyl-coenzyme A thioesterase 1">
    <location>
        <begin position="1"/>
        <end position="419"/>
    </location>
</feature>
<feature type="active site" description="Charge relay system" evidence="1">
    <location>
        <position position="232"/>
    </location>
</feature>
<feature type="active site" description="Charge relay system" evidence="1">
    <location>
        <position position="324"/>
    </location>
</feature>
<feature type="active site" description="Charge relay system" evidence="1">
    <location>
        <position position="358"/>
    </location>
</feature>
<feature type="modified residue" description="Phosphoserine" evidence="7">
    <location>
        <position position="416"/>
    </location>
</feature>
<feature type="sequence conflict" description="In Ref. 2 and 3." evidence="5" ref="2 3">
    <original>E</original>
    <variation>G</variation>
    <location>
        <position position="8"/>
    </location>
</feature>
<feature type="sequence conflict" description="In Ref. 2 and 3." evidence="5" ref="2 3">
    <original>I</original>
    <variation>L</variation>
    <location>
        <position position="81"/>
    </location>
</feature>
<feature type="sequence conflict" description="In Ref. 2 and 3." evidence="5" ref="2 3">
    <original>E</original>
    <variation>K</variation>
    <location>
        <position position="113"/>
    </location>
</feature>
<feature type="sequence conflict" description="In Ref. 2 and 3." evidence="5" ref="2 3">
    <original>D</original>
    <variation>N</variation>
    <location>
        <position position="162"/>
    </location>
</feature>